<name>PPK2_AUSRA</name>
<reference evidence="5" key="1">
    <citation type="journal article" date="2012" name="Syst. Biol.">
        <title>Peptidomics-based phylogeny and biogeography of Mantophasmatodea (Hexapoda).</title>
        <authorList>
            <person name="Predel R."/>
            <person name="Neupert S."/>
            <person name="Huetteroth W."/>
            <person name="Kahnt J."/>
            <person name="Waidelich D."/>
            <person name="Roth S."/>
        </authorList>
    </citation>
    <scope>PROTEIN SEQUENCE</scope>
    <scope>AMIDATION AT LEU-8</scope>
    <source>
        <tissue evidence="3">Corpora cardiaca</tissue>
    </source>
</reference>
<organism>
    <name type="scientific">Austrophasma rawsonvillense</name>
    <name type="common">Gladiator</name>
    <name type="synonym">Heel-walker</name>
    <dbReference type="NCBI Taxonomy" id="253137"/>
    <lineage>
        <taxon>Eukaryota</taxon>
        <taxon>Metazoa</taxon>
        <taxon>Ecdysozoa</taxon>
        <taxon>Arthropoda</taxon>
        <taxon>Hexapoda</taxon>
        <taxon>Insecta</taxon>
        <taxon>Pterygota</taxon>
        <taxon>Neoptera</taxon>
        <taxon>Polyneoptera</taxon>
        <taxon>Mantophasmatodea</taxon>
        <taxon>Austrophasmatidae</taxon>
        <taxon>Austrophasma</taxon>
    </lineage>
</organism>
<keyword id="KW-0027">Amidation</keyword>
<keyword id="KW-0903">Direct protein sequencing</keyword>
<keyword id="KW-0527">Neuropeptide</keyword>
<keyword id="KW-0964">Secreted</keyword>
<comment type="function">
    <text evidence="1">Myoactive.</text>
</comment>
<comment type="subcellular location">
    <subcellularLocation>
        <location evidence="6">Secreted</location>
    </subcellularLocation>
</comment>
<comment type="similarity">
    <text evidence="2">Belongs to the pyrokinin family.</text>
</comment>
<accession>B3A0B2</accession>
<dbReference type="GO" id="GO:0005576">
    <property type="term" value="C:extracellular region"/>
    <property type="evidence" value="ECO:0007669"/>
    <property type="project" value="UniProtKB-SubCell"/>
</dbReference>
<dbReference type="GO" id="GO:0007218">
    <property type="term" value="P:neuropeptide signaling pathway"/>
    <property type="evidence" value="ECO:0007669"/>
    <property type="project" value="UniProtKB-KW"/>
</dbReference>
<feature type="peptide" id="PRO_0000421584" description="Pyrokinin-2" evidence="3">
    <location>
        <begin position="1"/>
        <end position="8"/>
    </location>
</feature>
<feature type="modified residue" description="Leucine amide" evidence="3">
    <location>
        <position position="8"/>
    </location>
</feature>
<evidence type="ECO:0000250" key="1">
    <source>
        <dbReference type="UniProtKB" id="P82619"/>
    </source>
</evidence>
<evidence type="ECO:0000255" key="2"/>
<evidence type="ECO:0000269" key="3">
    <source>
    </source>
</evidence>
<evidence type="ECO:0000303" key="4">
    <source>
    </source>
</evidence>
<evidence type="ECO:0000305" key="5"/>
<evidence type="ECO:0000305" key="6">
    <source>
    </source>
</evidence>
<protein>
    <recommendedName>
        <fullName evidence="4">Pyrokinin-2</fullName>
        <shortName evidence="4">PK-2</shortName>
    </recommendedName>
    <alternativeName>
        <fullName evidence="1">FXPRL-amide</fullName>
    </alternativeName>
</protein>
<sequence length="8" mass="884">SPPFAPRL</sequence>
<proteinExistence type="evidence at protein level"/>